<organism>
    <name type="scientific">Homo sapiens</name>
    <name type="common">Human</name>
    <dbReference type="NCBI Taxonomy" id="9606"/>
    <lineage>
        <taxon>Eukaryota</taxon>
        <taxon>Metazoa</taxon>
        <taxon>Chordata</taxon>
        <taxon>Craniata</taxon>
        <taxon>Vertebrata</taxon>
        <taxon>Euteleostomi</taxon>
        <taxon>Mammalia</taxon>
        <taxon>Eutheria</taxon>
        <taxon>Euarchontoglires</taxon>
        <taxon>Primates</taxon>
        <taxon>Haplorrhini</taxon>
        <taxon>Catarrhini</taxon>
        <taxon>Hominidae</taxon>
        <taxon>Homo</taxon>
    </lineage>
</organism>
<protein>
    <recommendedName>
        <fullName>RNA-binding motif, single-stranded-interacting protein 2</fullName>
    </recommendedName>
    <alternativeName>
        <fullName>Suppressor of CDC2 with RNA-binding motif 3</fullName>
    </alternativeName>
</protein>
<sequence>MLLSVTSRPGISTFGYNRNNKKPYVSLAQQMAPPSPSNSTPNSSSGSNGNDQLSKTNLYIRGLQPGTTDQDLVKLCQPYGKIVSTKAILDKTTNKCKGYGFVDFDSPSAAQKAVTALKASGVQAQMAKQQEQDPTNLYISNLPLSMDEQELEGMLKPFGQVISTRILRDTSGTSRGVGFARMESTEKCEAIITHFNGKYIKTPPGVPAPSDPLLCKFADGGPKKRQNQGKFVQNGRAWPRNADMGVMALTYDPTTALQNGFYPAPYNITPNRMLAQSALSPYLSSPVSSYQRVTQTSPLQVPNPSWMHHHSYLMQPSGSVLTPGMDHPISLQPASMMGPLTQQLGHLSLSSTGTYMPTAAAMQGAYISQYTPVPSSSVSVEESSGQQNQVAVDAPSEHGVYSFQFNK</sequence>
<comment type="subcellular location">
    <subcellularLocation>
        <location evidence="3">Nucleus</location>
    </subcellularLocation>
</comment>
<feature type="chain" id="PRO_0000081800" description="RNA-binding motif, single-stranded-interacting protein 2">
    <location>
        <begin position="1"/>
        <end position="407"/>
    </location>
</feature>
<feature type="domain" description="RRM 1" evidence="1">
    <location>
        <begin position="56"/>
        <end position="129"/>
    </location>
</feature>
<feature type="domain" description="RRM 2" evidence="1">
    <location>
        <begin position="135"/>
        <end position="220"/>
    </location>
</feature>
<feature type="region of interest" description="Disordered" evidence="2">
    <location>
        <begin position="29"/>
        <end position="54"/>
    </location>
</feature>
<feature type="compositionally biased region" description="Low complexity" evidence="2">
    <location>
        <begin position="37"/>
        <end position="50"/>
    </location>
</feature>
<feature type="modified residue" description="N-acetylmethionine" evidence="7">
    <location>
        <position position="1"/>
    </location>
</feature>
<feature type="modified residue" description="Phosphoserine" evidence="4 5 6 8">
    <location>
        <position position="106"/>
    </location>
</feature>
<feature type="modified residue" description="Phosphothreonine" evidence="4">
    <location>
        <position position="269"/>
    </location>
</feature>
<feature type="modified residue" description="Phosphoserine" evidence="4 6">
    <location>
        <position position="280"/>
    </location>
</feature>
<feature type="modified residue" description="Phosphoserine" evidence="4 6">
    <location>
        <position position="285"/>
    </location>
</feature>
<feature type="strand" evidence="9">
    <location>
        <begin position="58"/>
        <end position="62"/>
    </location>
</feature>
<feature type="helix" evidence="9">
    <location>
        <begin position="69"/>
        <end position="73"/>
    </location>
</feature>
<feature type="turn" evidence="9">
    <location>
        <begin position="77"/>
        <end position="79"/>
    </location>
</feature>
<feature type="strand" evidence="9">
    <location>
        <begin position="82"/>
        <end position="87"/>
    </location>
</feature>
<feature type="strand" evidence="9">
    <location>
        <begin position="91"/>
        <end position="93"/>
    </location>
</feature>
<feature type="strand" evidence="9">
    <location>
        <begin position="98"/>
        <end position="105"/>
    </location>
</feature>
<feature type="helix" evidence="9">
    <location>
        <begin position="107"/>
        <end position="120"/>
    </location>
</feature>
<feature type="strand" evidence="9">
    <location>
        <begin position="124"/>
        <end position="126"/>
    </location>
</feature>
<accession>Q15434</accession>
<name>RBMS2_HUMAN</name>
<proteinExistence type="evidence at protein level"/>
<keyword id="KW-0002">3D-structure</keyword>
<keyword id="KW-0007">Acetylation</keyword>
<keyword id="KW-0539">Nucleus</keyword>
<keyword id="KW-0597">Phosphoprotein</keyword>
<keyword id="KW-1267">Proteomics identification</keyword>
<keyword id="KW-1185">Reference proteome</keyword>
<keyword id="KW-0677">Repeat</keyword>
<keyword id="KW-0694">RNA-binding</keyword>
<evidence type="ECO:0000255" key="1">
    <source>
        <dbReference type="PROSITE-ProRule" id="PRU00176"/>
    </source>
</evidence>
<evidence type="ECO:0000256" key="2">
    <source>
        <dbReference type="SAM" id="MobiDB-lite"/>
    </source>
</evidence>
<evidence type="ECO:0000305" key="3"/>
<evidence type="ECO:0007744" key="4">
    <source>
    </source>
</evidence>
<evidence type="ECO:0007744" key="5">
    <source>
    </source>
</evidence>
<evidence type="ECO:0007744" key="6">
    <source>
    </source>
</evidence>
<evidence type="ECO:0007744" key="7">
    <source>
    </source>
</evidence>
<evidence type="ECO:0007744" key="8">
    <source>
    </source>
</evidence>
<evidence type="ECO:0007829" key="9">
    <source>
        <dbReference type="PDB" id="1X4E"/>
    </source>
</evidence>
<reference key="1">
    <citation type="journal article" date="1994" name="Nucleic Acids Res.">
        <title>SCR: novel human suppressors of cdc2/cdc13 mutants of Schizosaccharomyces pombe harbour motifs for RNA binding proteins.</title>
        <authorList>
            <person name="Kanaoka Y."/>
            <person name="Nojima H."/>
        </authorList>
    </citation>
    <scope>NUCLEOTIDE SEQUENCE [MRNA]</scope>
</reference>
<reference key="2">
    <citation type="journal article" date="2004" name="Genome Res.">
        <title>The status, quality, and expansion of the NIH full-length cDNA project: the Mammalian Gene Collection (MGC).</title>
        <authorList>
            <consortium name="The MGC Project Team"/>
        </authorList>
    </citation>
    <scope>NUCLEOTIDE SEQUENCE [LARGE SCALE MRNA]</scope>
    <source>
        <tissue>Lung</tissue>
        <tissue>Skin</tissue>
    </source>
</reference>
<reference key="3">
    <citation type="journal article" date="2008" name="Mol. Cell">
        <title>Kinase-selective enrichment enables quantitative phosphoproteomics of the kinome across the cell cycle.</title>
        <authorList>
            <person name="Daub H."/>
            <person name="Olsen J.V."/>
            <person name="Bairlein M."/>
            <person name="Gnad F."/>
            <person name="Oppermann F.S."/>
            <person name="Korner R."/>
            <person name="Greff Z."/>
            <person name="Keri G."/>
            <person name="Stemmann O."/>
            <person name="Mann M."/>
        </authorList>
    </citation>
    <scope>IDENTIFICATION BY MASS SPECTROMETRY [LARGE SCALE ANALYSIS]</scope>
    <source>
        <tissue>Cervix carcinoma</tissue>
    </source>
</reference>
<reference key="4">
    <citation type="journal article" date="2008" name="Proc. Natl. Acad. Sci. U.S.A.">
        <title>A quantitative atlas of mitotic phosphorylation.</title>
        <authorList>
            <person name="Dephoure N."/>
            <person name="Zhou C."/>
            <person name="Villen J."/>
            <person name="Beausoleil S.A."/>
            <person name="Bakalarski C.E."/>
            <person name="Elledge S.J."/>
            <person name="Gygi S.P."/>
        </authorList>
    </citation>
    <scope>PHOSPHORYLATION [LARGE SCALE ANALYSIS] AT SER-106; THR-269; SER-280 AND SER-285</scope>
    <scope>IDENTIFICATION BY MASS SPECTROMETRY [LARGE SCALE ANALYSIS]</scope>
    <source>
        <tissue>Cervix carcinoma</tissue>
    </source>
</reference>
<reference key="5">
    <citation type="journal article" date="2009" name="Anal. Chem.">
        <title>Lys-N and trypsin cover complementary parts of the phosphoproteome in a refined SCX-based approach.</title>
        <authorList>
            <person name="Gauci S."/>
            <person name="Helbig A.O."/>
            <person name="Slijper M."/>
            <person name="Krijgsveld J."/>
            <person name="Heck A.J."/>
            <person name="Mohammed S."/>
        </authorList>
    </citation>
    <scope>IDENTIFICATION BY MASS SPECTROMETRY [LARGE SCALE ANALYSIS]</scope>
</reference>
<reference key="6">
    <citation type="journal article" date="2009" name="Mol. Cell. Proteomics">
        <title>Large-scale proteomics analysis of the human kinome.</title>
        <authorList>
            <person name="Oppermann F.S."/>
            <person name="Gnad F."/>
            <person name="Olsen J.V."/>
            <person name="Hornberger R."/>
            <person name="Greff Z."/>
            <person name="Keri G."/>
            <person name="Mann M."/>
            <person name="Daub H."/>
        </authorList>
    </citation>
    <scope>IDENTIFICATION BY MASS SPECTROMETRY [LARGE SCALE ANALYSIS]</scope>
</reference>
<reference key="7">
    <citation type="journal article" date="2009" name="Sci. Signal.">
        <title>Quantitative phosphoproteomic analysis of T cell receptor signaling reveals system-wide modulation of protein-protein interactions.</title>
        <authorList>
            <person name="Mayya V."/>
            <person name="Lundgren D.H."/>
            <person name="Hwang S.-I."/>
            <person name="Rezaul K."/>
            <person name="Wu L."/>
            <person name="Eng J.K."/>
            <person name="Rodionov V."/>
            <person name="Han D.K."/>
        </authorList>
    </citation>
    <scope>PHOSPHORYLATION [LARGE SCALE ANALYSIS] AT SER-106</scope>
    <scope>IDENTIFICATION BY MASS SPECTROMETRY [LARGE SCALE ANALYSIS]</scope>
    <source>
        <tissue>Leukemic T-cell</tissue>
    </source>
</reference>
<reference key="8">
    <citation type="journal article" date="2010" name="Sci. Signal.">
        <title>Quantitative phosphoproteomics reveals widespread full phosphorylation site occupancy during mitosis.</title>
        <authorList>
            <person name="Olsen J.V."/>
            <person name="Vermeulen M."/>
            <person name="Santamaria A."/>
            <person name="Kumar C."/>
            <person name="Miller M.L."/>
            <person name="Jensen L.J."/>
            <person name="Gnad F."/>
            <person name="Cox J."/>
            <person name="Jensen T.S."/>
            <person name="Nigg E.A."/>
            <person name="Brunak S."/>
            <person name="Mann M."/>
        </authorList>
    </citation>
    <scope>PHOSPHORYLATION [LARGE SCALE ANALYSIS] AT SER-106; SER-280 AND SER-285</scope>
    <scope>IDENTIFICATION BY MASS SPECTROMETRY [LARGE SCALE ANALYSIS]</scope>
    <source>
        <tissue>Cervix carcinoma</tissue>
    </source>
</reference>
<reference key="9">
    <citation type="journal article" date="2012" name="Proc. Natl. Acad. Sci. U.S.A.">
        <title>N-terminal acetylome analyses and functional insights of the N-terminal acetyltransferase NatB.</title>
        <authorList>
            <person name="Van Damme P."/>
            <person name="Lasa M."/>
            <person name="Polevoda B."/>
            <person name="Gazquez C."/>
            <person name="Elosegui-Artola A."/>
            <person name="Kim D.S."/>
            <person name="De Juan-Pardo E."/>
            <person name="Demeyer K."/>
            <person name="Hole K."/>
            <person name="Larrea E."/>
            <person name="Timmerman E."/>
            <person name="Prieto J."/>
            <person name="Arnesen T."/>
            <person name="Sherman F."/>
            <person name="Gevaert K."/>
            <person name="Aldabe R."/>
        </authorList>
    </citation>
    <scope>ACETYLATION [LARGE SCALE ANALYSIS] AT MET-1</scope>
    <scope>IDENTIFICATION BY MASS SPECTROMETRY [LARGE SCALE ANALYSIS]</scope>
</reference>
<reference key="10">
    <citation type="journal article" date="2013" name="J. Proteome Res.">
        <title>Toward a comprehensive characterization of a human cancer cell phosphoproteome.</title>
        <authorList>
            <person name="Zhou H."/>
            <person name="Di Palma S."/>
            <person name="Preisinger C."/>
            <person name="Peng M."/>
            <person name="Polat A.N."/>
            <person name="Heck A.J."/>
            <person name="Mohammed S."/>
        </authorList>
    </citation>
    <scope>PHOSPHORYLATION [LARGE SCALE ANALYSIS] AT SER-106</scope>
    <scope>IDENTIFICATION BY MASS SPECTROMETRY [LARGE SCALE ANALYSIS]</scope>
    <source>
        <tissue>Cervix carcinoma</tissue>
    </source>
</reference>
<reference key="11">
    <citation type="submission" date="2005-11" db="PDB data bank">
        <title>Solution structure of RRM domain in RNA binding motif, single-stranded interacting protein 2.</title>
        <authorList>
            <consortium name="RIKEN structural genomics initiative (RSGI)"/>
        </authorList>
    </citation>
    <scope>STRUCTURE BY NMR OF 58-129</scope>
</reference>
<gene>
    <name type="primary">RBMS2</name>
    <name type="synonym">SCR3</name>
</gene>
<dbReference type="EMBL" id="D28483">
    <property type="protein sequence ID" value="BAA05842.1"/>
    <property type="molecule type" value="mRNA"/>
</dbReference>
<dbReference type="EMBL" id="BC027863">
    <property type="protein sequence ID" value="AAH27863.1"/>
    <property type="molecule type" value="mRNA"/>
</dbReference>
<dbReference type="EMBL" id="BC072679">
    <property type="protein sequence ID" value="AAH72679.1"/>
    <property type="molecule type" value="mRNA"/>
</dbReference>
<dbReference type="CCDS" id="CCDS8923.1"/>
<dbReference type="PIR" id="S47660">
    <property type="entry name" value="S47660"/>
</dbReference>
<dbReference type="RefSeq" id="NP_001401390.1">
    <property type="nucleotide sequence ID" value="NM_001414461.1"/>
</dbReference>
<dbReference type="RefSeq" id="NP_002889.1">
    <property type="nucleotide sequence ID" value="NM_002898.4"/>
</dbReference>
<dbReference type="RefSeq" id="XP_006719607.1">
    <property type="nucleotide sequence ID" value="XM_006719544.3"/>
</dbReference>
<dbReference type="RefSeq" id="XP_011536942.1">
    <property type="nucleotide sequence ID" value="XM_011538640.2"/>
</dbReference>
<dbReference type="PDB" id="1X4E">
    <property type="method" value="NMR"/>
    <property type="chains" value="A=58-129"/>
</dbReference>
<dbReference type="PDBsum" id="1X4E"/>
<dbReference type="SMR" id="Q15434"/>
<dbReference type="BioGRID" id="111874">
    <property type="interactions" value="256"/>
</dbReference>
<dbReference type="FunCoup" id="Q15434">
    <property type="interactions" value="1150"/>
</dbReference>
<dbReference type="IntAct" id="Q15434">
    <property type="interactions" value="194"/>
</dbReference>
<dbReference type="MINT" id="Q15434"/>
<dbReference type="STRING" id="9606.ENSP00000262031"/>
<dbReference type="GlyCosmos" id="Q15434">
    <property type="glycosylation" value="2 sites, 1 glycan"/>
</dbReference>
<dbReference type="GlyGen" id="Q15434">
    <property type="glycosylation" value="4 sites, 1 O-linked glycan (4 sites)"/>
</dbReference>
<dbReference type="iPTMnet" id="Q15434"/>
<dbReference type="PhosphoSitePlus" id="Q15434"/>
<dbReference type="BioMuta" id="RBMS2"/>
<dbReference type="DMDM" id="55976301"/>
<dbReference type="jPOST" id="Q15434"/>
<dbReference type="MassIVE" id="Q15434"/>
<dbReference type="PaxDb" id="9606-ENSP00000262031"/>
<dbReference type="PeptideAtlas" id="Q15434"/>
<dbReference type="ProteomicsDB" id="60590"/>
<dbReference type="Pumba" id="Q15434"/>
<dbReference type="Antibodypedia" id="28267">
    <property type="antibodies" value="213 antibodies from 25 providers"/>
</dbReference>
<dbReference type="DNASU" id="5939"/>
<dbReference type="Ensembl" id="ENST00000262031.10">
    <property type="protein sequence ID" value="ENSP00000262031.5"/>
    <property type="gene ID" value="ENSG00000076067.14"/>
</dbReference>
<dbReference type="GeneID" id="5939"/>
<dbReference type="KEGG" id="hsa:5939"/>
<dbReference type="MANE-Select" id="ENST00000262031.10">
    <property type="protein sequence ID" value="ENSP00000262031.5"/>
    <property type="RefSeq nucleotide sequence ID" value="NM_002898.4"/>
    <property type="RefSeq protein sequence ID" value="NP_002889.1"/>
</dbReference>
<dbReference type="UCSC" id="uc001sln.3">
    <property type="organism name" value="human"/>
</dbReference>
<dbReference type="AGR" id="HGNC:9909"/>
<dbReference type="CTD" id="5939"/>
<dbReference type="DisGeNET" id="5939"/>
<dbReference type="GeneCards" id="RBMS2"/>
<dbReference type="HGNC" id="HGNC:9909">
    <property type="gene designation" value="RBMS2"/>
</dbReference>
<dbReference type="HPA" id="ENSG00000076067">
    <property type="expression patterns" value="Low tissue specificity"/>
</dbReference>
<dbReference type="MIM" id="602387">
    <property type="type" value="gene"/>
</dbReference>
<dbReference type="neXtProt" id="NX_Q15434"/>
<dbReference type="OpenTargets" id="ENSG00000076067"/>
<dbReference type="PharmGKB" id="PA34275"/>
<dbReference type="VEuPathDB" id="HostDB:ENSG00000076067"/>
<dbReference type="eggNOG" id="KOG4733">
    <property type="taxonomic scope" value="Eukaryota"/>
</dbReference>
<dbReference type="GeneTree" id="ENSGT00940000155250"/>
<dbReference type="InParanoid" id="Q15434"/>
<dbReference type="OMA" id="PNASWMH"/>
<dbReference type="OrthoDB" id="271725at2759"/>
<dbReference type="PAN-GO" id="Q15434">
    <property type="GO annotations" value="6 GO annotations based on evolutionary models"/>
</dbReference>
<dbReference type="PhylomeDB" id="Q15434"/>
<dbReference type="TreeFam" id="TF314644"/>
<dbReference type="PathwayCommons" id="Q15434"/>
<dbReference type="SignaLink" id="Q15434"/>
<dbReference type="BioGRID-ORCS" id="5939">
    <property type="hits" value="19 hits in 1148 CRISPR screens"/>
</dbReference>
<dbReference type="CD-CODE" id="232F8A39">
    <property type="entry name" value="P-body"/>
</dbReference>
<dbReference type="CD-CODE" id="DEE660B4">
    <property type="entry name" value="Stress granule"/>
</dbReference>
<dbReference type="ChiTaRS" id="RBMS2">
    <property type="organism name" value="human"/>
</dbReference>
<dbReference type="EvolutionaryTrace" id="Q15434"/>
<dbReference type="GenomeRNAi" id="5939"/>
<dbReference type="Pharos" id="Q15434">
    <property type="development level" value="Tbio"/>
</dbReference>
<dbReference type="PRO" id="PR:Q15434"/>
<dbReference type="Proteomes" id="UP000005640">
    <property type="component" value="Chromosome 12"/>
</dbReference>
<dbReference type="RNAct" id="Q15434">
    <property type="molecule type" value="protein"/>
</dbReference>
<dbReference type="Bgee" id="ENSG00000076067">
    <property type="expression patterns" value="Expressed in sural nerve and 169 other cell types or tissues"/>
</dbReference>
<dbReference type="ExpressionAtlas" id="Q15434">
    <property type="expression patterns" value="baseline and differential"/>
</dbReference>
<dbReference type="GO" id="GO:0005829">
    <property type="term" value="C:cytosol"/>
    <property type="evidence" value="ECO:0000318"/>
    <property type="project" value="GO_Central"/>
</dbReference>
<dbReference type="GO" id="GO:0005634">
    <property type="term" value="C:nucleus"/>
    <property type="evidence" value="ECO:0000318"/>
    <property type="project" value="GO_Central"/>
</dbReference>
<dbReference type="GO" id="GO:1990904">
    <property type="term" value="C:ribonucleoprotein complex"/>
    <property type="evidence" value="ECO:0000318"/>
    <property type="project" value="GO_Central"/>
</dbReference>
<dbReference type="GO" id="GO:0003730">
    <property type="term" value="F:mRNA 3'-UTR binding"/>
    <property type="evidence" value="ECO:0000318"/>
    <property type="project" value="GO_Central"/>
</dbReference>
<dbReference type="GO" id="GO:0008143">
    <property type="term" value="F:poly(A) binding"/>
    <property type="evidence" value="ECO:0000318"/>
    <property type="project" value="GO_Central"/>
</dbReference>
<dbReference type="GO" id="GO:0008266">
    <property type="term" value="F:poly(U) RNA binding"/>
    <property type="evidence" value="ECO:0000318"/>
    <property type="project" value="GO_Central"/>
</dbReference>
<dbReference type="GO" id="GO:0003723">
    <property type="term" value="F:RNA binding"/>
    <property type="evidence" value="ECO:0007005"/>
    <property type="project" value="UniProtKB"/>
</dbReference>
<dbReference type="GO" id="GO:0006396">
    <property type="term" value="P:RNA processing"/>
    <property type="evidence" value="ECO:0000304"/>
    <property type="project" value="ProtInc"/>
</dbReference>
<dbReference type="CDD" id="cd12471">
    <property type="entry name" value="RRM1_MSSP2"/>
    <property type="match status" value="1"/>
</dbReference>
<dbReference type="CDD" id="cd12474">
    <property type="entry name" value="RRM2_MSSP2"/>
    <property type="match status" value="1"/>
</dbReference>
<dbReference type="FunFam" id="3.30.70.330:FF:000012">
    <property type="entry name" value="RNA-binding motif, single-stranded-interacting protein 3 isoform 1"/>
    <property type="match status" value="1"/>
</dbReference>
<dbReference type="FunFam" id="3.30.70.330:FF:000014">
    <property type="entry name" value="RNA-binding motif, single-stranded-interacting protein 3 isoform 1"/>
    <property type="match status" value="1"/>
</dbReference>
<dbReference type="Gene3D" id="3.30.70.330">
    <property type="match status" value="2"/>
</dbReference>
<dbReference type="InterPro" id="IPR012677">
    <property type="entry name" value="Nucleotide-bd_a/b_plait_sf"/>
</dbReference>
<dbReference type="InterPro" id="IPR035979">
    <property type="entry name" value="RBD_domain_sf"/>
</dbReference>
<dbReference type="InterPro" id="IPR000504">
    <property type="entry name" value="RRM_dom"/>
</dbReference>
<dbReference type="PANTHER" id="PTHR24012">
    <property type="entry name" value="RNA BINDING PROTEIN"/>
    <property type="match status" value="1"/>
</dbReference>
<dbReference type="Pfam" id="PF00076">
    <property type="entry name" value="RRM_1"/>
    <property type="match status" value="2"/>
</dbReference>
<dbReference type="SMART" id="SM00360">
    <property type="entry name" value="RRM"/>
    <property type="match status" value="2"/>
</dbReference>
<dbReference type="SUPFAM" id="SSF54928">
    <property type="entry name" value="RNA-binding domain, RBD"/>
    <property type="match status" value="1"/>
</dbReference>
<dbReference type="PROSITE" id="PS50102">
    <property type="entry name" value="RRM"/>
    <property type="match status" value="2"/>
</dbReference>